<feature type="chain" id="PRO_1000205784" description="Putative membrane protein insertion efficiency factor">
    <location>
        <begin position="1"/>
        <end position="70"/>
    </location>
</feature>
<gene>
    <name type="ordered locus">GM21_4150</name>
</gene>
<evidence type="ECO:0000255" key="1">
    <source>
        <dbReference type="HAMAP-Rule" id="MF_00386"/>
    </source>
</evidence>
<reference key="1">
    <citation type="submission" date="2009-07" db="EMBL/GenBank/DDBJ databases">
        <title>Complete sequence of Geobacter sp. M21.</title>
        <authorList>
            <consortium name="US DOE Joint Genome Institute"/>
            <person name="Lucas S."/>
            <person name="Copeland A."/>
            <person name="Lapidus A."/>
            <person name="Glavina del Rio T."/>
            <person name="Dalin E."/>
            <person name="Tice H."/>
            <person name="Bruce D."/>
            <person name="Goodwin L."/>
            <person name="Pitluck S."/>
            <person name="Saunders E."/>
            <person name="Brettin T."/>
            <person name="Detter J.C."/>
            <person name="Han C."/>
            <person name="Larimer F."/>
            <person name="Land M."/>
            <person name="Hauser L."/>
            <person name="Kyrpides N."/>
            <person name="Ovchinnikova G."/>
            <person name="Lovley D."/>
        </authorList>
    </citation>
    <scope>NUCLEOTIDE SEQUENCE [LARGE SCALE GENOMIC DNA]</scope>
    <source>
        <strain>M21</strain>
    </source>
</reference>
<organism>
    <name type="scientific">Geobacter sp. (strain M21)</name>
    <dbReference type="NCBI Taxonomy" id="443144"/>
    <lineage>
        <taxon>Bacteria</taxon>
        <taxon>Pseudomonadati</taxon>
        <taxon>Thermodesulfobacteriota</taxon>
        <taxon>Desulfuromonadia</taxon>
        <taxon>Geobacterales</taxon>
        <taxon>Geobacteraceae</taxon>
        <taxon>Geobacter</taxon>
    </lineage>
</organism>
<dbReference type="EMBL" id="CP001661">
    <property type="protein sequence ID" value="ACT20165.1"/>
    <property type="molecule type" value="Genomic_DNA"/>
</dbReference>
<dbReference type="STRING" id="443144.GM21_4150"/>
<dbReference type="KEGG" id="gem:GM21_4150"/>
<dbReference type="eggNOG" id="COG0759">
    <property type="taxonomic scope" value="Bacteria"/>
</dbReference>
<dbReference type="HOGENOM" id="CLU_144811_6_0_7"/>
<dbReference type="GO" id="GO:0005886">
    <property type="term" value="C:plasma membrane"/>
    <property type="evidence" value="ECO:0007669"/>
    <property type="project" value="UniProtKB-SubCell"/>
</dbReference>
<dbReference type="HAMAP" id="MF_00386">
    <property type="entry name" value="UPF0161_YidD"/>
    <property type="match status" value="1"/>
</dbReference>
<dbReference type="InterPro" id="IPR002696">
    <property type="entry name" value="Membr_insert_effic_factor_YidD"/>
</dbReference>
<dbReference type="NCBIfam" id="TIGR00278">
    <property type="entry name" value="membrane protein insertion efficiency factor YidD"/>
    <property type="match status" value="1"/>
</dbReference>
<dbReference type="PANTHER" id="PTHR33383">
    <property type="entry name" value="MEMBRANE PROTEIN INSERTION EFFICIENCY FACTOR-RELATED"/>
    <property type="match status" value="1"/>
</dbReference>
<dbReference type="PANTHER" id="PTHR33383:SF1">
    <property type="entry name" value="MEMBRANE PROTEIN INSERTION EFFICIENCY FACTOR-RELATED"/>
    <property type="match status" value="1"/>
</dbReference>
<dbReference type="Pfam" id="PF01809">
    <property type="entry name" value="YidD"/>
    <property type="match status" value="1"/>
</dbReference>
<dbReference type="SMART" id="SM01234">
    <property type="entry name" value="Haemolytic"/>
    <property type="match status" value="1"/>
</dbReference>
<proteinExistence type="inferred from homology"/>
<sequence>MLKQIFIGLVVFYQRFISPLKAPSCRFYPTCSHYSLQALEKYGPVKGLWLTAARVLKCHPFHPGGYDPVK</sequence>
<accession>C6DYS2</accession>
<protein>
    <recommendedName>
        <fullName evidence="1">Putative membrane protein insertion efficiency factor</fullName>
    </recommendedName>
</protein>
<comment type="function">
    <text evidence="1">Could be involved in insertion of integral membrane proteins into the membrane.</text>
</comment>
<comment type="subcellular location">
    <subcellularLocation>
        <location evidence="1">Cell inner membrane</location>
        <topology evidence="1">Peripheral membrane protein</topology>
        <orientation evidence="1">Cytoplasmic side</orientation>
    </subcellularLocation>
</comment>
<comment type="similarity">
    <text evidence="1">Belongs to the UPF0161 family.</text>
</comment>
<keyword id="KW-0997">Cell inner membrane</keyword>
<keyword id="KW-1003">Cell membrane</keyword>
<keyword id="KW-0472">Membrane</keyword>
<name>YIDD_GEOSM</name>